<protein>
    <recommendedName>
        <fullName>Uncharacterized protein FAM241A</fullName>
    </recommendedName>
</protein>
<accession>Q8N8J7</accession>
<accession>Q49A91</accession>
<accession>Q4W5C7</accession>
<accession>Q8TBF9</accession>
<evidence type="ECO:0000255" key="1"/>
<evidence type="ECO:0000256" key="2">
    <source>
        <dbReference type="SAM" id="MobiDB-lite"/>
    </source>
</evidence>
<evidence type="ECO:0000269" key="3">
    <source>
    </source>
</evidence>
<evidence type="ECO:0000305" key="4"/>
<evidence type="ECO:0000312" key="5">
    <source>
        <dbReference type="HGNC" id="HGNC:26813"/>
    </source>
</evidence>
<proteinExistence type="evidence at protein level"/>
<name>F241A_HUMAN</name>
<keyword id="KW-0472">Membrane</keyword>
<keyword id="KW-1267">Proteomics identification</keyword>
<keyword id="KW-1185">Reference proteome</keyword>
<keyword id="KW-0812">Transmembrane</keyword>
<keyword id="KW-1133">Transmembrane helix</keyword>
<feature type="chain" id="PRO_0000286629" description="Uncharacterized protein FAM241A">
    <location>
        <begin position="1"/>
        <end position="132"/>
    </location>
</feature>
<feature type="transmembrane region" description="Helical" evidence="1">
    <location>
        <begin position="100"/>
        <end position="120"/>
    </location>
</feature>
<feature type="region of interest" description="Disordered" evidence="2">
    <location>
        <begin position="1"/>
        <end position="68"/>
    </location>
</feature>
<feature type="sequence variant" id="VAR_032150" description="In dbSNP:rs17852081." evidence="3">
    <original>P</original>
    <variation>Q</variation>
    <location>
        <position position="46"/>
    </location>
</feature>
<feature type="sequence conflict" description="In Ref. 1; BAC04841 and 3; AAH22534." evidence="4" ref="1 3">
    <original>G</original>
    <variation>E</variation>
    <location>
        <position position="32"/>
    </location>
</feature>
<feature type="sequence conflict" description="In Ref. 3; AAH22534." evidence="4" ref="3">
    <original>P</original>
    <variation>Q</variation>
    <location>
        <position position="39"/>
    </location>
</feature>
<reference key="1">
    <citation type="journal article" date="2004" name="Nat. Genet.">
        <title>Complete sequencing and characterization of 21,243 full-length human cDNAs.</title>
        <authorList>
            <person name="Ota T."/>
            <person name="Suzuki Y."/>
            <person name="Nishikawa T."/>
            <person name="Otsuki T."/>
            <person name="Sugiyama T."/>
            <person name="Irie R."/>
            <person name="Wakamatsu A."/>
            <person name="Hayashi K."/>
            <person name="Sato H."/>
            <person name="Nagai K."/>
            <person name="Kimura K."/>
            <person name="Makita H."/>
            <person name="Sekine M."/>
            <person name="Obayashi M."/>
            <person name="Nishi T."/>
            <person name="Shibahara T."/>
            <person name="Tanaka T."/>
            <person name="Ishii S."/>
            <person name="Yamamoto J."/>
            <person name="Saito K."/>
            <person name="Kawai Y."/>
            <person name="Isono Y."/>
            <person name="Nakamura Y."/>
            <person name="Nagahari K."/>
            <person name="Murakami K."/>
            <person name="Yasuda T."/>
            <person name="Iwayanagi T."/>
            <person name="Wagatsuma M."/>
            <person name="Shiratori A."/>
            <person name="Sudo H."/>
            <person name="Hosoiri T."/>
            <person name="Kaku Y."/>
            <person name="Kodaira H."/>
            <person name="Kondo H."/>
            <person name="Sugawara M."/>
            <person name="Takahashi M."/>
            <person name="Kanda K."/>
            <person name="Yokoi T."/>
            <person name="Furuya T."/>
            <person name="Kikkawa E."/>
            <person name="Omura Y."/>
            <person name="Abe K."/>
            <person name="Kamihara K."/>
            <person name="Katsuta N."/>
            <person name="Sato K."/>
            <person name="Tanikawa M."/>
            <person name="Yamazaki M."/>
            <person name="Ninomiya K."/>
            <person name="Ishibashi T."/>
            <person name="Yamashita H."/>
            <person name="Murakawa K."/>
            <person name="Fujimori K."/>
            <person name="Tanai H."/>
            <person name="Kimata M."/>
            <person name="Watanabe M."/>
            <person name="Hiraoka S."/>
            <person name="Chiba Y."/>
            <person name="Ishida S."/>
            <person name="Ono Y."/>
            <person name="Takiguchi S."/>
            <person name="Watanabe S."/>
            <person name="Yosida M."/>
            <person name="Hotuta T."/>
            <person name="Kusano J."/>
            <person name="Kanehori K."/>
            <person name="Takahashi-Fujii A."/>
            <person name="Hara H."/>
            <person name="Tanase T.-O."/>
            <person name="Nomura Y."/>
            <person name="Togiya S."/>
            <person name="Komai F."/>
            <person name="Hara R."/>
            <person name="Takeuchi K."/>
            <person name="Arita M."/>
            <person name="Imose N."/>
            <person name="Musashino K."/>
            <person name="Yuuki H."/>
            <person name="Oshima A."/>
            <person name="Sasaki N."/>
            <person name="Aotsuka S."/>
            <person name="Yoshikawa Y."/>
            <person name="Matsunawa H."/>
            <person name="Ichihara T."/>
            <person name="Shiohata N."/>
            <person name="Sano S."/>
            <person name="Moriya S."/>
            <person name="Momiyama H."/>
            <person name="Satoh N."/>
            <person name="Takami S."/>
            <person name="Terashima Y."/>
            <person name="Suzuki O."/>
            <person name="Nakagawa S."/>
            <person name="Senoh A."/>
            <person name="Mizoguchi H."/>
            <person name="Goto Y."/>
            <person name="Shimizu F."/>
            <person name="Wakebe H."/>
            <person name="Hishigaki H."/>
            <person name="Watanabe T."/>
            <person name="Sugiyama A."/>
            <person name="Takemoto M."/>
            <person name="Kawakami B."/>
            <person name="Yamazaki M."/>
            <person name="Watanabe K."/>
            <person name="Kumagai A."/>
            <person name="Itakura S."/>
            <person name="Fukuzumi Y."/>
            <person name="Fujimori Y."/>
            <person name="Komiyama M."/>
            <person name="Tashiro H."/>
            <person name="Tanigami A."/>
            <person name="Fujiwara T."/>
            <person name="Ono T."/>
            <person name="Yamada K."/>
            <person name="Fujii Y."/>
            <person name="Ozaki K."/>
            <person name="Hirao M."/>
            <person name="Ohmori Y."/>
            <person name="Kawabata A."/>
            <person name="Hikiji T."/>
            <person name="Kobatake N."/>
            <person name="Inagaki H."/>
            <person name="Ikema Y."/>
            <person name="Okamoto S."/>
            <person name="Okitani R."/>
            <person name="Kawakami T."/>
            <person name="Noguchi S."/>
            <person name="Itoh T."/>
            <person name="Shigeta K."/>
            <person name="Senba T."/>
            <person name="Matsumura K."/>
            <person name="Nakajima Y."/>
            <person name="Mizuno T."/>
            <person name="Morinaga M."/>
            <person name="Sasaki M."/>
            <person name="Togashi T."/>
            <person name="Oyama M."/>
            <person name="Hata H."/>
            <person name="Watanabe M."/>
            <person name="Komatsu T."/>
            <person name="Mizushima-Sugano J."/>
            <person name="Satoh T."/>
            <person name="Shirai Y."/>
            <person name="Takahashi Y."/>
            <person name="Nakagawa K."/>
            <person name="Okumura K."/>
            <person name="Nagase T."/>
            <person name="Nomura N."/>
            <person name="Kikuchi H."/>
            <person name="Masuho Y."/>
            <person name="Yamashita R."/>
            <person name="Nakai K."/>
            <person name="Yada T."/>
            <person name="Nakamura Y."/>
            <person name="Ohara O."/>
            <person name="Isogai T."/>
            <person name="Sugano S."/>
        </authorList>
    </citation>
    <scope>NUCLEOTIDE SEQUENCE [LARGE SCALE MRNA]</scope>
</reference>
<reference key="2">
    <citation type="journal article" date="2005" name="Nature">
        <title>Generation and annotation of the DNA sequences of human chromosomes 2 and 4.</title>
        <authorList>
            <person name="Hillier L.W."/>
            <person name="Graves T.A."/>
            <person name="Fulton R.S."/>
            <person name="Fulton L.A."/>
            <person name="Pepin K.H."/>
            <person name="Minx P."/>
            <person name="Wagner-McPherson C."/>
            <person name="Layman D."/>
            <person name="Wylie K."/>
            <person name="Sekhon M."/>
            <person name="Becker M.C."/>
            <person name="Fewell G.A."/>
            <person name="Delehaunty K.D."/>
            <person name="Miner T.L."/>
            <person name="Nash W.E."/>
            <person name="Kremitzki C."/>
            <person name="Oddy L."/>
            <person name="Du H."/>
            <person name="Sun H."/>
            <person name="Bradshaw-Cordum H."/>
            <person name="Ali J."/>
            <person name="Carter J."/>
            <person name="Cordes M."/>
            <person name="Harris A."/>
            <person name="Isak A."/>
            <person name="van Brunt A."/>
            <person name="Nguyen C."/>
            <person name="Du F."/>
            <person name="Courtney L."/>
            <person name="Kalicki J."/>
            <person name="Ozersky P."/>
            <person name="Abbott S."/>
            <person name="Armstrong J."/>
            <person name="Belter E.A."/>
            <person name="Caruso L."/>
            <person name="Cedroni M."/>
            <person name="Cotton M."/>
            <person name="Davidson T."/>
            <person name="Desai A."/>
            <person name="Elliott G."/>
            <person name="Erb T."/>
            <person name="Fronick C."/>
            <person name="Gaige T."/>
            <person name="Haakenson W."/>
            <person name="Haglund K."/>
            <person name="Holmes A."/>
            <person name="Harkins R."/>
            <person name="Kim K."/>
            <person name="Kruchowski S.S."/>
            <person name="Strong C.M."/>
            <person name="Grewal N."/>
            <person name="Goyea E."/>
            <person name="Hou S."/>
            <person name="Levy A."/>
            <person name="Martinka S."/>
            <person name="Mead K."/>
            <person name="McLellan M.D."/>
            <person name="Meyer R."/>
            <person name="Randall-Maher J."/>
            <person name="Tomlinson C."/>
            <person name="Dauphin-Kohlberg S."/>
            <person name="Kozlowicz-Reilly A."/>
            <person name="Shah N."/>
            <person name="Swearengen-Shahid S."/>
            <person name="Snider J."/>
            <person name="Strong J.T."/>
            <person name="Thompson J."/>
            <person name="Yoakum M."/>
            <person name="Leonard S."/>
            <person name="Pearman C."/>
            <person name="Trani L."/>
            <person name="Radionenko M."/>
            <person name="Waligorski J.E."/>
            <person name="Wang C."/>
            <person name="Rock S.M."/>
            <person name="Tin-Wollam A.-M."/>
            <person name="Maupin R."/>
            <person name="Latreille P."/>
            <person name="Wendl M.C."/>
            <person name="Yang S.-P."/>
            <person name="Pohl C."/>
            <person name="Wallis J.W."/>
            <person name="Spieth J."/>
            <person name="Bieri T.A."/>
            <person name="Berkowicz N."/>
            <person name="Nelson J.O."/>
            <person name="Osborne J."/>
            <person name="Ding L."/>
            <person name="Meyer R."/>
            <person name="Sabo A."/>
            <person name="Shotland Y."/>
            <person name="Sinha P."/>
            <person name="Wohldmann P.E."/>
            <person name="Cook L.L."/>
            <person name="Hickenbotham M.T."/>
            <person name="Eldred J."/>
            <person name="Williams D."/>
            <person name="Jones T.A."/>
            <person name="She X."/>
            <person name="Ciccarelli F.D."/>
            <person name="Izaurralde E."/>
            <person name="Taylor J."/>
            <person name="Schmutz J."/>
            <person name="Myers R.M."/>
            <person name="Cox D.R."/>
            <person name="Huang X."/>
            <person name="McPherson J.D."/>
            <person name="Mardis E.R."/>
            <person name="Clifton S.W."/>
            <person name="Warren W.C."/>
            <person name="Chinwalla A.T."/>
            <person name="Eddy S.R."/>
            <person name="Marra M.A."/>
            <person name="Ovcharenko I."/>
            <person name="Furey T.S."/>
            <person name="Miller W."/>
            <person name="Eichler E.E."/>
            <person name="Bork P."/>
            <person name="Suyama M."/>
            <person name="Torrents D."/>
            <person name="Waterston R.H."/>
            <person name="Wilson R.K."/>
        </authorList>
    </citation>
    <scope>NUCLEOTIDE SEQUENCE [LARGE SCALE GENOMIC DNA]</scope>
</reference>
<reference key="3">
    <citation type="journal article" date="2004" name="Genome Res.">
        <title>The status, quality, and expansion of the NIH full-length cDNA project: the Mammalian Gene Collection (MGC).</title>
        <authorList>
            <consortium name="The MGC Project Team"/>
        </authorList>
    </citation>
    <scope>NUCLEOTIDE SEQUENCE [LARGE SCALE MRNA]</scope>
    <scope>VARIANT GLN-46</scope>
    <source>
        <tissue>Brain</tissue>
    </source>
</reference>
<comment type="interaction">
    <interactant intactId="EBI-14063291">
        <id>Q8N8J7</id>
    </interactant>
    <interactant intactId="EBI-2873246">
        <id>Q8IUN9</id>
        <label>CLEC10A</label>
    </interactant>
    <organismsDiffer>false</organismsDiffer>
    <experiments>2</experiments>
</comment>
<comment type="subcellular location">
    <subcellularLocation>
        <location evidence="4">Membrane</location>
        <topology evidence="1">Single-pass membrane protein</topology>
    </subcellularLocation>
</comment>
<comment type="similarity">
    <text evidence="4">Belongs to the FAM241 family.</text>
</comment>
<sequence length="132" mass="14653">MCSAGELLRGGDGGERDEDGDALAEREAAGTGWDPGASPRRRGQRPKESEQDVEDSQNHTGEPVGDDYKKMGTLFGELNKNLINMGFTRMYFGERIVEPVIVIFFWVMLWFLGLQALGLVAVLCLVIIYVQQ</sequence>
<dbReference type="EMBL" id="AK096689">
    <property type="protein sequence ID" value="BAC04841.1"/>
    <property type="molecule type" value="mRNA"/>
</dbReference>
<dbReference type="EMBL" id="AC093663">
    <property type="status" value="NOT_ANNOTATED_CDS"/>
    <property type="molecule type" value="Genomic_DNA"/>
</dbReference>
<dbReference type="EMBL" id="AC109347">
    <property type="protein sequence ID" value="AAY40961.1"/>
    <property type="molecule type" value="Genomic_DNA"/>
</dbReference>
<dbReference type="EMBL" id="BC022534">
    <property type="protein sequence ID" value="AAH22534.1"/>
    <property type="molecule type" value="mRNA"/>
</dbReference>
<dbReference type="CCDS" id="CCDS3695.1"/>
<dbReference type="RefSeq" id="NP_689613.2">
    <property type="nucleotide sequence ID" value="NM_152400.3"/>
</dbReference>
<dbReference type="BioGRID" id="126333">
    <property type="interactions" value="107"/>
</dbReference>
<dbReference type="FunCoup" id="Q8N8J7">
    <property type="interactions" value="1174"/>
</dbReference>
<dbReference type="IntAct" id="Q8N8J7">
    <property type="interactions" value="100"/>
</dbReference>
<dbReference type="STRING" id="9606.ENSP00000310182"/>
<dbReference type="GlyGen" id="Q8N8J7">
    <property type="glycosylation" value="1 site, 1 O-linked glycan (1 site)"/>
</dbReference>
<dbReference type="iPTMnet" id="Q8N8J7"/>
<dbReference type="PhosphoSitePlus" id="Q8N8J7"/>
<dbReference type="SwissPalm" id="Q8N8J7"/>
<dbReference type="BioMuta" id="FAM241A"/>
<dbReference type="jPOST" id="Q8N8J7"/>
<dbReference type="MassIVE" id="Q8N8J7"/>
<dbReference type="PaxDb" id="9606-ENSP00000310182"/>
<dbReference type="PeptideAtlas" id="Q8N8J7"/>
<dbReference type="ProteomicsDB" id="72431"/>
<dbReference type="Pumba" id="Q8N8J7"/>
<dbReference type="Antibodypedia" id="54648">
    <property type="antibodies" value="9 antibodies from 4 providers"/>
</dbReference>
<dbReference type="DNASU" id="132720"/>
<dbReference type="Ensembl" id="ENST00000309733.6">
    <property type="protein sequence ID" value="ENSP00000310182.4"/>
    <property type="gene ID" value="ENSG00000174749.6"/>
</dbReference>
<dbReference type="GeneID" id="132720"/>
<dbReference type="KEGG" id="hsa:132720"/>
<dbReference type="MANE-Select" id="ENST00000309733.6">
    <property type="protein sequence ID" value="ENSP00000310182.4"/>
    <property type="RefSeq nucleotide sequence ID" value="NM_152400.3"/>
    <property type="RefSeq protein sequence ID" value="NP_689613.2"/>
</dbReference>
<dbReference type="UCSC" id="uc003iah.3">
    <property type="organism name" value="human"/>
</dbReference>
<dbReference type="AGR" id="HGNC:26813"/>
<dbReference type="CTD" id="132720"/>
<dbReference type="DisGeNET" id="132720"/>
<dbReference type="GeneCards" id="FAM241A"/>
<dbReference type="HGNC" id="HGNC:26813">
    <property type="gene designation" value="FAM241A"/>
</dbReference>
<dbReference type="HPA" id="ENSG00000174749">
    <property type="expression patterns" value="Low tissue specificity"/>
</dbReference>
<dbReference type="neXtProt" id="NX_Q8N8J7"/>
<dbReference type="OpenTargets" id="ENSG00000174749"/>
<dbReference type="PharmGKB" id="PA162379734"/>
<dbReference type="VEuPathDB" id="HostDB:ENSG00000174749"/>
<dbReference type="eggNOG" id="ENOG502S3RI">
    <property type="taxonomic scope" value="Eukaryota"/>
</dbReference>
<dbReference type="GeneTree" id="ENSGT00940000154340"/>
<dbReference type="HOGENOM" id="CLU_160107_0_0_1"/>
<dbReference type="InParanoid" id="Q8N8J7"/>
<dbReference type="OMA" id="MCSAGQL"/>
<dbReference type="OrthoDB" id="9903800at2759"/>
<dbReference type="PAN-GO" id="Q8N8J7">
    <property type="GO annotations" value="1 GO annotation based on evolutionary models"/>
</dbReference>
<dbReference type="PhylomeDB" id="Q8N8J7"/>
<dbReference type="TreeFam" id="TF335755"/>
<dbReference type="PathwayCommons" id="Q8N8J7"/>
<dbReference type="SignaLink" id="Q8N8J7"/>
<dbReference type="BioGRID-ORCS" id="132720">
    <property type="hits" value="16 hits in 1147 CRISPR screens"/>
</dbReference>
<dbReference type="GenomeRNAi" id="132720"/>
<dbReference type="Pharos" id="Q8N8J7">
    <property type="development level" value="Tdark"/>
</dbReference>
<dbReference type="PRO" id="PR:Q8N8J7"/>
<dbReference type="Proteomes" id="UP000005640">
    <property type="component" value="Chromosome 4"/>
</dbReference>
<dbReference type="RNAct" id="Q8N8J7">
    <property type="molecule type" value="protein"/>
</dbReference>
<dbReference type="Bgee" id="ENSG00000174749">
    <property type="expression patterns" value="Expressed in parietal pleura and 175 other cell types or tissues"/>
</dbReference>
<dbReference type="GO" id="GO:0005794">
    <property type="term" value="C:Golgi apparatus"/>
    <property type="evidence" value="ECO:0000314"/>
    <property type="project" value="HPA"/>
</dbReference>
<dbReference type="GO" id="GO:0043231">
    <property type="term" value="C:intracellular membrane-bounded organelle"/>
    <property type="evidence" value="ECO:0000318"/>
    <property type="project" value="GO_Central"/>
</dbReference>
<dbReference type="GO" id="GO:0016020">
    <property type="term" value="C:membrane"/>
    <property type="evidence" value="ECO:0007669"/>
    <property type="project" value="UniProtKB-SubCell"/>
</dbReference>
<dbReference type="InterPro" id="IPR027953">
    <property type="entry name" value="DUF4605"/>
</dbReference>
<dbReference type="InterPro" id="IPR052502">
    <property type="entry name" value="FAM241_domain"/>
</dbReference>
<dbReference type="PANTHER" id="PTHR33690">
    <property type="entry name" value="DUF4605 DOMAIN-CONTAINING PROTEIN"/>
    <property type="match status" value="1"/>
</dbReference>
<dbReference type="PANTHER" id="PTHR33690:SF1">
    <property type="entry name" value="FAMILY WITH SEQUENCE SIMILARITY 241 MEMBER A"/>
    <property type="match status" value="1"/>
</dbReference>
<dbReference type="Pfam" id="PF15378">
    <property type="entry name" value="DUF4605"/>
    <property type="match status" value="1"/>
</dbReference>
<organism>
    <name type="scientific">Homo sapiens</name>
    <name type="common">Human</name>
    <dbReference type="NCBI Taxonomy" id="9606"/>
    <lineage>
        <taxon>Eukaryota</taxon>
        <taxon>Metazoa</taxon>
        <taxon>Chordata</taxon>
        <taxon>Craniata</taxon>
        <taxon>Vertebrata</taxon>
        <taxon>Euteleostomi</taxon>
        <taxon>Mammalia</taxon>
        <taxon>Eutheria</taxon>
        <taxon>Euarchontoglires</taxon>
        <taxon>Primates</taxon>
        <taxon>Haplorrhini</taxon>
        <taxon>Catarrhini</taxon>
        <taxon>Hominidae</taxon>
        <taxon>Homo</taxon>
    </lineage>
</organism>
<gene>
    <name evidence="5" type="primary">FAM241A</name>
    <name type="synonym">C4orf32</name>
</gene>